<name>CAPSD_TTVV2</name>
<comment type="function">
    <text evidence="1">Self assemble to form an icosahedral capsid.</text>
</comment>
<comment type="subcellular location">
    <subcellularLocation>
        <location evidence="3">Virion</location>
    </subcellularLocation>
</comment>
<comment type="similarity">
    <text evidence="3">Belongs to the anelloviridae capsid protein family.</text>
</comment>
<gene>
    <name type="ORF">ORF1</name>
</gene>
<organism>
    <name type="scientific">Torque teno virus (isolate Human/Japan/TRM1/1999)</name>
    <name type="common">TTV</name>
    <name type="synonym">Torque teno virus genotype 1a</name>
    <dbReference type="NCBI Taxonomy" id="486275"/>
    <lineage>
        <taxon>Viruses</taxon>
        <taxon>Viruses incertae sedis</taxon>
        <taxon>Anelloviridae</taxon>
        <taxon>Torque teno virus</taxon>
    </lineage>
</organism>
<keyword id="KW-0167">Capsid protein</keyword>
<keyword id="KW-1185">Reference proteome</keyword>
<keyword id="KW-1140">T=1 icosahedral capsid protein</keyword>
<keyword id="KW-0946">Virion</keyword>
<reference key="1">
    <citation type="journal article" date="1999" name="J. Virol.">
        <title>Quasispecies of TT virus (TTV) with sequence divergence in hypervariable regions of the capsid protein in chronic TTV infection.</title>
        <authorList>
            <person name="Nishizawa T."/>
            <person name="Okamoto H."/>
            <person name="Tsuda F."/>
            <person name="Aikawa T."/>
            <person name="Sugai Y."/>
            <person name="Konishi K."/>
            <person name="Akahane Y."/>
            <person name="Ukita M."/>
            <person name="Tanaka T."/>
            <person name="Miyakawa Y."/>
            <person name="Mayumi M."/>
        </authorList>
    </citation>
    <scope>NUCLEOTIDE SEQUENCE [GENOMIC DNA]</scope>
</reference>
<reference key="2">
    <citation type="journal article" date="2007" name="Rev. Med. Virol.">
        <title>Torque teno virus (TTV): current status.</title>
        <authorList>
            <person name="Hino S."/>
            <person name="Miyata H."/>
        </authorList>
    </citation>
    <scope>REVIEW</scope>
</reference>
<proteinExistence type="inferred from homology"/>
<evidence type="ECO:0000250" key="1"/>
<evidence type="ECO:0000256" key="2">
    <source>
        <dbReference type="SAM" id="MobiDB-lite"/>
    </source>
</evidence>
<evidence type="ECO:0000305" key="3"/>
<protein>
    <recommendedName>
        <fullName>Capsid protein</fullName>
    </recommendedName>
</protein>
<feature type="chain" id="PRO_0000315327" description="Capsid protein">
    <location>
        <begin position="1"/>
        <end position="770"/>
    </location>
</feature>
<feature type="region of interest" description="Disordered" evidence="2">
    <location>
        <begin position="647"/>
        <end position="678"/>
    </location>
</feature>
<feature type="region of interest" description="Disordered" evidence="2">
    <location>
        <begin position="697"/>
        <end position="717"/>
    </location>
</feature>
<feature type="compositionally biased region" description="Polar residues" evidence="2">
    <location>
        <begin position="647"/>
        <end position="656"/>
    </location>
</feature>
<feature type="compositionally biased region" description="Basic and acidic residues" evidence="2">
    <location>
        <begin position="666"/>
        <end position="678"/>
    </location>
</feature>
<feature type="compositionally biased region" description="Low complexity" evidence="2">
    <location>
        <begin position="703"/>
        <end position="717"/>
    </location>
</feature>
<sequence>MAYGWWRRRRRRWRRWRRRPWRRRWRTRRRRPARRRGRRRNVRRRRRGGRWRRRYRRWKRKGRRRKKAKIIIRQWQPNYRRRCNIVGYIPVLICGENTVSRNYATHSDDTNYPGPFGGGMTTDKFTLRILYDEYKRFMNYWTASNEDLDLCRYLGVNLYFFRHPDVDFIIKINTMPPFLDTELTAPSIHPGMLALDKRARWIPSLKSRPGKKHYIKIRVEAPKMFTDKWYPQTDLCDMVLLTVYATTADMQYPFGSPLTDSVVVNFQVLQSMYDQNISILPTEKSKRTQLHDNITRYTPFYNTTQTIAQLKPFVDAGNVTPVSPTTTWGSYINTTKFTTTATTTYTYPGTTTTTVTMLTCNDSWYRGTVYNNQISQLPKKAAEFYSKATKTLLGDTFTTEDYTLEYHGGLYSSIWLSAGRSYFETPGVYTDIKYNPFTDRGEGNMLWIDWLSKKNMNYDKVQSKCLISDLPLWAAAYGYVEFCAKSTGDQNIHMNAKLLIRSPFTDPQLLVHTDPTKGFVPYSLNFGNGKMPGGSSNVPIRMRAKWYPTLFHQQEVLEALAQSGPFAYHSDIKKVSLGMKYRFKWIWGGNPVRQQVVRNPCKETHSSGNRVPRSLQIVDPKYNSPELTFHTWDFRRGLFGPKAIQRMQQQPTTTDIFSAGRKRPRRDTEVYHSSQEGEQKESLLFLPVKLLRRVPPWEDSQQEESGSQSSEEETQTVSQQLKQQLQQQRILGVKLRLLFNQVQKIQQNQDINPTLLPRGGDLASLFQIAP</sequence>
<dbReference type="EMBL" id="AB026347">
    <property type="protein sequence ID" value="BAA85666.1"/>
    <property type="molecule type" value="Genomic_DNA"/>
</dbReference>
<dbReference type="SMR" id="Q9QUB8"/>
<dbReference type="Proteomes" id="UP000008256">
    <property type="component" value="Genome"/>
</dbReference>
<dbReference type="GO" id="GO:0039615">
    <property type="term" value="C:T=1 icosahedral viral capsid"/>
    <property type="evidence" value="ECO:0007669"/>
    <property type="project" value="UniProtKB-KW"/>
</dbReference>
<dbReference type="InterPro" id="IPR004219">
    <property type="entry name" value="TTvirus_Unk"/>
</dbReference>
<dbReference type="Pfam" id="PF02956">
    <property type="entry name" value="TT_ORF1"/>
    <property type="match status" value="1"/>
</dbReference>
<accession>Q9QUB8</accession>
<organismHost>
    <name type="scientific">Homo sapiens</name>
    <name type="common">Human</name>
    <dbReference type="NCBI Taxonomy" id="9606"/>
</organismHost>